<reference key="1">
    <citation type="journal article" date="1995" name="Science">
        <title>Whole-genome random sequencing and assembly of Haemophilus influenzae Rd.</title>
        <authorList>
            <person name="Fleischmann R.D."/>
            <person name="Adams M.D."/>
            <person name="White O."/>
            <person name="Clayton R.A."/>
            <person name="Kirkness E.F."/>
            <person name="Kerlavage A.R."/>
            <person name="Bult C.J."/>
            <person name="Tomb J.-F."/>
            <person name="Dougherty B.A."/>
            <person name="Merrick J.M."/>
            <person name="McKenney K."/>
            <person name="Sutton G.G."/>
            <person name="FitzHugh W."/>
            <person name="Fields C.A."/>
            <person name="Gocayne J.D."/>
            <person name="Scott J.D."/>
            <person name="Shirley R."/>
            <person name="Liu L.-I."/>
            <person name="Glodek A."/>
            <person name="Kelley J.M."/>
            <person name="Weidman J.F."/>
            <person name="Phillips C.A."/>
            <person name="Spriggs T."/>
            <person name="Hedblom E."/>
            <person name="Cotton M.D."/>
            <person name="Utterback T.R."/>
            <person name="Hanna M.C."/>
            <person name="Nguyen D.T."/>
            <person name="Saudek D.M."/>
            <person name="Brandon R.C."/>
            <person name="Fine L.D."/>
            <person name="Fritchman J.L."/>
            <person name="Fuhrmann J.L."/>
            <person name="Geoghagen N.S.M."/>
            <person name="Gnehm C.L."/>
            <person name="McDonald L.A."/>
            <person name="Small K.V."/>
            <person name="Fraser C.M."/>
            <person name="Smith H.O."/>
            <person name="Venter J.C."/>
        </authorList>
    </citation>
    <scope>NUCLEOTIDE SEQUENCE [LARGE SCALE GENOMIC DNA]</scope>
    <source>
        <strain>ATCC 51907 / DSM 11121 / KW20 / Rd</strain>
    </source>
</reference>
<dbReference type="EC" id="1.10.3.-"/>
<dbReference type="EMBL" id="L42023">
    <property type="protein sequence ID" value="AAC22731.1"/>
    <property type="molecule type" value="Genomic_DNA"/>
</dbReference>
<dbReference type="PIR" id="D64181">
    <property type="entry name" value="D64181"/>
</dbReference>
<dbReference type="RefSeq" id="NP_439231.1">
    <property type="nucleotide sequence ID" value="NC_000907.1"/>
</dbReference>
<dbReference type="SMR" id="P45020"/>
<dbReference type="STRING" id="71421.HI_1075"/>
<dbReference type="EnsemblBacteria" id="AAC22731">
    <property type="protein sequence ID" value="AAC22731"/>
    <property type="gene ID" value="HI_1075"/>
</dbReference>
<dbReference type="KEGG" id="hin:HI_1075"/>
<dbReference type="PATRIC" id="fig|71421.8.peg.1117"/>
<dbReference type="eggNOG" id="COG1294">
    <property type="taxonomic scope" value="Bacteria"/>
</dbReference>
<dbReference type="HOGENOM" id="CLU_049294_0_0_6"/>
<dbReference type="OrthoDB" id="9776710at2"/>
<dbReference type="PhylomeDB" id="P45020"/>
<dbReference type="BioCyc" id="HINF71421:G1GJ1-1109-MONOMER"/>
<dbReference type="Proteomes" id="UP000000579">
    <property type="component" value="Chromosome"/>
</dbReference>
<dbReference type="GO" id="GO:0070069">
    <property type="term" value="C:cytochrome complex"/>
    <property type="evidence" value="ECO:0000318"/>
    <property type="project" value="GO_Central"/>
</dbReference>
<dbReference type="GO" id="GO:0005886">
    <property type="term" value="C:plasma membrane"/>
    <property type="evidence" value="ECO:0007669"/>
    <property type="project" value="UniProtKB-SubCell"/>
</dbReference>
<dbReference type="GO" id="GO:0009055">
    <property type="term" value="F:electron transfer activity"/>
    <property type="evidence" value="ECO:0000318"/>
    <property type="project" value="GO_Central"/>
</dbReference>
<dbReference type="GO" id="GO:0046872">
    <property type="term" value="F:metal ion binding"/>
    <property type="evidence" value="ECO:0007669"/>
    <property type="project" value="UniProtKB-KW"/>
</dbReference>
<dbReference type="GO" id="GO:0016682">
    <property type="term" value="F:oxidoreductase activity, acting on diphenols and related substances as donors, oxygen as acceptor"/>
    <property type="evidence" value="ECO:0000318"/>
    <property type="project" value="GO_Central"/>
</dbReference>
<dbReference type="GO" id="GO:0019646">
    <property type="term" value="P:aerobic electron transport chain"/>
    <property type="evidence" value="ECO:0000318"/>
    <property type="project" value="GO_Central"/>
</dbReference>
<dbReference type="InterPro" id="IPR003317">
    <property type="entry name" value="Cyt-d_oxidase_su2"/>
</dbReference>
<dbReference type="NCBIfam" id="TIGR00203">
    <property type="entry name" value="cydB"/>
    <property type="match status" value="1"/>
</dbReference>
<dbReference type="PANTHER" id="PTHR43141:SF5">
    <property type="entry name" value="CYTOCHROME BD-I UBIQUINOL OXIDASE SUBUNIT 2"/>
    <property type="match status" value="1"/>
</dbReference>
<dbReference type="PANTHER" id="PTHR43141">
    <property type="entry name" value="CYTOCHROME BD2 SUBUNIT II"/>
    <property type="match status" value="1"/>
</dbReference>
<dbReference type="Pfam" id="PF02322">
    <property type="entry name" value="Cyt_bd_oxida_II"/>
    <property type="match status" value="1"/>
</dbReference>
<dbReference type="PIRSF" id="PIRSF000267">
    <property type="entry name" value="Cyt_oxidse_sub2"/>
    <property type="match status" value="1"/>
</dbReference>
<sequence length="378" mass="42067">MIDYEFLRFIWWVLVIVLLIGFSVTDGFDMGVTALLPVIGKKEVERRIMINTIAPHWDGNQVWLLTAGGAIFAAWPIVYAVSFSGFYIALVLVLAALFLRPLGFEYRAKIDNPTWRSVWDWGLFAGGFVPALVFGVAFGNLLQGVPFHFNELTQVTYTGSFFELLNPFALLCGVISLSMLVTHGANWLQMKTTEALRDRARTVSQIGSIVTLIAFVLAGVWLYSKDGYVVTSTIDHFAPSSPMNKEVAVETGAWFRNFNEMPILWIFPALAVVAALLNAAFSKANRCGFAFFFSALTMAGVIITAAVSMFPFVMPSSSHPEQSLLMWDSTSSELTLTLMLIFAVVFVVIALAYTIWSYSKMFGRLDANFIDKNKHSLY</sequence>
<accession>P45020</accession>
<protein>
    <recommendedName>
        <fullName>Probable cytochrome oxidase subunit 2</fullName>
        <ecNumber>1.10.3.-</ecNumber>
    </recommendedName>
    <alternativeName>
        <fullName>Cytochrome oxidase subunit II</fullName>
    </alternativeName>
</protein>
<feature type="chain" id="PRO_0000183929" description="Probable cytochrome oxidase subunit 2">
    <location>
        <begin position="1"/>
        <end position="378"/>
    </location>
</feature>
<feature type="topological domain" description="Cytoplasmic" evidence="2">
    <location>
        <begin position="1"/>
        <end position="8"/>
    </location>
</feature>
<feature type="transmembrane region" description="Helical" evidence="2">
    <location>
        <begin position="9"/>
        <end position="28"/>
    </location>
</feature>
<feature type="topological domain" description="Periplasmic" evidence="2">
    <location>
        <begin position="29"/>
        <end position="79"/>
    </location>
</feature>
<feature type="transmembrane region" description="Helical" evidence="2">
    <location>
        <begin position="80"/>
        <end position="99"/>
    </location>
</feature>
<feature type="topological domain" description="Cytoplasmic" evidence="2">
    <location>
        <begin position="100"/>
        <end position="122"/>
    </location>
</feature>
<feature type="transmembrane region" description="Helical" evidence="2">
    <location>
        <begin position="123"/>
        <end position="142"/>
    </location>
</feature>
<feature type="topological domain" description="Periplasmic" evidence="2">
    <location>
        <begin position="143"/>
        <end position="164"/>
    </location>
</feature>
<feature type="transmembrane region" description="Helical" evidence="2">
    <location>
        <begin position="165"/>
        <end position="184"/>
    </location>
</feature>
<feature type="topological domain" description="Cytoplasmic" evidence="2">
    <location>
        <begin position="185"/>
        <end position="205"/>
    </location>
</feature>
<feature type="transmembrane region" description="Helical" evidence="2">
    <location>
        <begin position="206"/>
        <end position="224"/>
    </location>
</feature>
<feature type="topological domain" description="Periplasmic" evidence="2">
    <location>
        <begin position="225"/>
        <end position="261"/>
    </location>
</feature>
<feature type="transmembrane region" description="Helical" evidence="2">
    <location>
        <begin position="262"/>
        <end position="281"/>
    </location>
</feature>
<feature type="topological domain" description="Cytoplasmic" evidence="2">
    <location>
        <begin position="282"/>
        <end position="291"/>
    </location>
</feature>
<feature type="transmembrane region" description="Helical" evidence="2">
    <location>
        <begin position="292"/>
        <end position="311"/>
    </location>
</feature>
<feature type="topological domain" description="Periplasmic" evidence="2">
    <location>
        <begin position="312"/>
        <end position="335"/>
    </location>
</feature>
<feature type="transmembrane region" description="Helical" evidence="2">
    <location>
        <begin position="336"/>
        <end position="355"/>
    </location>
</feature>
<feature type="topological domain" description="Cytoplasmic" evidence="2">
    <location>
        <begin position="356"/>
        <end position="378"/>
    </location>
</feature>
<proteinExistence type="inferred from homology"/>
<evidence type="ECO:0000250" key="1"/>
<evidence type="ECO:0000255" key="2"/>
<evidence type="ECO:0000305" key="3"/>
<comment type="function">
    <text>Probable cytochrome oxidase subunit.</text>
</comment>
<comment type="subunit">
    <text evidence="1">Heterodimer of subunits I and II.</text>
</comment>
<comment type="subcellular location">
    <subcellularLocation>
        <location evidence="1">Cell inner membrane</location>
        <topology evidence="1">Multi-pass membrane protein</topology>
    </subcellularLocation>
</comment>
<comment type="miscellaneous">
    <text>Probable ortholog of the ancestor of E.coli AppB/CydB.</text>
</comment>
<comment type="similarity">
    <text evidence="3">Belongs to the cytochrome ubiquinol oxidase subunit 2 family.</text>
</comment>
<name>CYOB_HAEIN</name>
<gene>
    <name type="ordered locus">HI_1075</name>
</gene>
<keyword id="KW-0997">Cell inner membrane</keyword>
<keyword id="KW-1003">Cell membrane</keyword>
<keyword id="KW-0249">Electron transport</keyword>
<keyword id="KW-0349">Heme</keyword>
<keyword id="KW-0408">Iron</keyword>
<keyword id="KW-0472">Membrane</keyword>
<keyword id="KW-0479">Metal-binding</keyword>
<keyword id="KW-0560">Oxidoreductase</keyword>
<keyword id="KW-1185">Reference proteome</keyword>
<keyword id="KW-0812">Transmembrane</keyword>
<keyword id="KW-1133">Transmembrane helix</keyword>
<keyword id="KW-0813">Transport</keyword>
<organism>
    <name type="scientific">Haemophilus influenzae (strain ATCC 51907 / DSM 11121 / KW20 / Rd)</name>
    <dbReference type="NCBI Taxonomy" id="71421"/>
    <lineage>
        <taxon>Bacteria</taxon>
        <taxon>Pseudomonadati</taxon>
        <taxon>Pseudomonadota</taxon>
        <taxon>Gammaproteobacteria</taxon>
        <taxon>Pasteurellales</taxon>
        <taxon>Pasteurellaceae</taxon>
        <taxon>Haemophilus</taxon>
    </lineage>
</organism>